<evidence type="ECO:0000255" key="1">
    <source>
        <dbReference type="HAMAP-Rule" id="MF_00388"/>
    </source>
</evidence>
<sequence>MFRQRTIQNLVRTTGVGVHSGRRVELTLRPAQPNTGIVFHRVDLPQVVDLPAQATGVGDTRMASVLQQGNVRVSTVEHLMSALAGLGIDNLHVDLTAEEVPIMDGSAATFVYLLRSAGIVEQNAPKHFIRVLKPIEVREGEGRNEKWARLEPHEGFALAFSIDFRHPAIDSTANFAEIDFATHSYVREIARARTFGFVNEVEALRSMGLARGGSLDNAIVMDEFRVLNSDGLRYDDEFVKHKILDAIGDLYLLGKPLVARYVAQKSGHALNNQLARALLEQQDAWELVTYESQAEAPQAFRHEWKLA</sequence>
<keyword id="KW-0378">Hydrolase</keyword>
<keyword id="KW-0441">Lipid A biosynthesis</keyword>
<keyword id="KW-0444">Lipid biosynthesis</keyword>
<keyword id="KW-0443">Lipid metabolism</keyword>
<keyword id="KW-0479">Metal-binding</keyword>
<keyword id="KW-1185">Reference proteome</keyword>
<keyword id="KW-0862">Zinc</keyword>
<proteinExistence type="inferred from homology"/>
<organism>
    <name type="scientific">Bordetella avium (strain 197N)</name>
    <dbReference type="NCBI Taxonomy" id="360910"/>
    <lineage>
        <taxon>Bacteria</taxon>
        <taxon>Pseudomonadati</taxon>
        <taxon>Pseudomonadota</taxon>
        <taxon>Betaproteobacteria</taxon>
        <taxon>Burkholderiales</taxon>
        <taxon>Alcaligenaceae</taxon>
        <taxon>Bordetella</taxon>
    </lineage>
</organism>
<protein>
    <recommendedName>
        <fullName evidence="1">UDP-3-O-acyl-N-acetylglucosamine deacetylase</fullName>
        <shortName evidence="1">UDP-3-O-acyl-GlcNAc deacetylase</shortName>
        <ecNumber evidence="1">3.5.1.108</ecNumber>
    </recommendedName>
    <alternativeName>
        <fullName evidence="1">UDP-3-O-[R-3-hydroxymyristoyl]-N-acetylglucosamine deacetylase</fullName>
    </alternativeName>
</protein>
<dbReference type="EC" id="3.5.1.108" evidence="1"/>
<dbReference type="EMBL" id="AM167904">
    <property type="protein sequence ID" value="CAJ50483.1"/>
    <property type="molecule type" value="Genomic_DNA"/>
</dbReference>
<dbReference type="RefSeq" id="WP_012418513.1">
    <property type="nucleotide sequence ID" value="NC_010645.1"/>
</dbReference>
<dbReference type="SMR" id="Q2KVH1"/>
<dbReference type="STRING" id="360910.BAV2873"/>
<dbReference type="GeneID" id="92933877"/>
<dbReference type="KEGG" id="bav:BAV2873"/>
<dbReference type="eggNOG" id="COG0774">
    <property type="taxonomic scope" value="Bacteria"/>
</dbReference>
<dbReference type="HOGENOM" id="CLU_046528_1_0_4"/>
<dbReference type="OrthoDB" id="9802746at2"/>
<dbReference type="UniPathway" id="UPA00359">
    <property type="reaction ID" value="UER00478"/>
</dbReference>
<dbReference type="Proteomes" id="UP000001977">
    <property type="component" value="Chromosome"/>
</dbReference>
<dbReference type="GO" id="GO:0016020">
    <property type="term" value="C:membrane"/>
    <property type="evidence" value="ECO:0007669"/>
    <property type="project" value="GOC"/>
</dbReference>
<dbReference type="GO" id="GO:0046872">
    <property type="term" value="F:metal ion binding"/>
    <property type="evidence" value="ECO:0007669"/>
    <property type="project" value="UniProtKB-KW"/>
</dbReference>
<dbReference type="GO" id="GO:0103117">
    <property type="term" value="F:UDP-3-O-acyl-N-acetylglucosamine deacetylase activity"/>
    <property type="evidence" value="ECO:0007669"/>
    <property type="project" value="UniProtKB-UniRule"/>
</dbReference>
<dbReference type="GO" id="GO:0009245">
    <property type="term" value="P:lipid A biosynthetic process"/>
    <property type="evidence" value="ECO:0007669"/>
    <property type="project" value="UniProtKB-UniRule"/>
</dbReference>
<dbReference type="Gene3D" id="3.30.230.20">
    <property type="entry name" value="lpxc deacetylase, domain 1"/>
    <property type="match status" value="1"/>
</dbReference>
<dbReference type="Gene3D" id="3.30.1700.10">
    <property type="entry name" value="lpxc deacetylase, domain 2"/>
    <property type="match status" value="1"/>
</dbReference>
<dbReference type="HAMAP" id="MF_00388">
    <property type="entry name" value="LpxC"/>
    <property type="match status" value="1"/>
</dbReference>
<dbReference type="InterPro" id="IPR020568">
    <property type="entry name" value="Ribosomal_Su5_D2-typ_SF"/>
</dbReference>
<dbReference type="InterPro" id="IPR004463">
    <property type="entry name" value="UDP-acyl_GlcNac_deAcase"/>
</dbReference>
<dbReference type="InterPro" id="IPR011334">
    <property type="entry name" value="UDP-acyl_GlcNac_deAcase_C"/>
</dbReference>
<dbReference type="InterPro" id="IPR015870">
    <property type="entry name" value="UDP-acyl_N-AcGlcN_deAcase_N"/>
</dbReference>
<dbReference type="NCBIfam" id="TIGR00325">
    <property type="entry name" value="lpxC"/>
    <property type="match status" value="1"/>
</dbReference>
<dbReference type="PANTHER" id="PTHR33694">
    <property type="entry name" value="UDP-3-O-ACYL-N-ACETYLGLUCOSAMINE DEACETYLASE 1, MITOCHONDRIAL-RELATED"/>
    <property type="match status" value="1"/>
</dbReference>
<dbReference type="PANTHER" id="PTHR33694:SF1">
    <property type="entry name" value="UDP-3-O-ACYL-N-ACETYLGLUCOSAMINE DEACETYLASE 1, MITOCHONDRIAL-RELATED"/>
    <property type="match status" value="1"/>
</dbReference>
<dbReference type="Pfam" id="PF03331">
    <property type="entry name" value="LpxC"/>
    <property type="match status" value="1"/>
</dbReference>
<dbReference type="SUPFAM" id="SSF54211">
    <property type="entry name" value="Ribosomal protein S5 domain 2-like"/>
    <property type="match status" value="2"/>
</dbReference>
<name>LPXC_BORA1</name>
<comment type="function">
    <text evidence="1">Catalyzes the hydrolysis of UDP-3-O-myristoyl-N-acetylglucosamine to form UDP-3-O-myristoylglucosamine and acetate, the committed step in lipid A biosynthesis.</text>
</comment>
<comment type="catalytic activity">
    <reaction evidence="1">
        <text>a UDP-3-O-[(3R)-3-hydroxyacyl]-N-acetyl-alpha-D-glucosamine + H2O = a UDP-3-O-[(3R)-3-hydroxyacyl]-alpha-D-glucosamine + acetate</text>
        <dbReference type="Rhea" id="RHEA:67816"/>
        <dbReference type="ChEBI" id="CHEBI:15377"/>
        <dbReference type="ChEBI" id="CHEBI:30089"/>
        <dbReference type="ChEBI" id="CHEBI:137740"/>
        <dbReference type="ChEBI" id="CHEBI:173225"/>
        <dbReference type="EC" id="3.5.1.108"/>
    </reaction>
</comment>
<comment type="cofactor">
    <cofactor evidence="1">
        <name>Zn(2+)</name>
        <dbReference type="ChEBI" id="CHEBI:29105"/>
    </cofactor>
</comment>
<comment type="pathway">
    <text evidence="1">Glycolipid biosynthesis; lipid IV(A) biosynthesis; lipid IV(A) from (3R)-3-hydroxytetradecanoyl-[acyl-carrier-protein] and UDP-N-acetyl-alpha-D-glucosamine: step 2/6.</text>
</comment>
<comment type="similarity">
    <text evidence="1">Belongs to the LpxC family.</text>
</comment>
<reference key="1">
    <citation type="journal article" date="2006" name="J. Bacteriol.">
        <title>Comparison of the genome sequence of the poultry pathogen Bordetella avium with those of B. bronchiseptica, B. pertussis, and B. parapertussis reveals extensive diversity in surface structures associated with host interaction.</title>
        <authorList>
            <person name="Sebaihia M."/>
            <person name="Preston A."/>
            <person name="Maskell D.J."/>
            <person name="Kuzmiak H."/>
            <person name="Connell T.D."/>
            <person name="King N.D."/>
            <person name="Orndorff P.E."/>
            <person name="Miyamoto D.M."/>
            <person name="Thomson N.R."/>
            <person name="Harris D."/>
            <person name="Goble A."/>
            <person name="Lord A."/>
            <person name="Murphy L."/>
            <person name="Quail M.A."/>
            <person name="Rutter S."/>
            <person name="Squares R."/>
            <person name="Squares S."/>
            <person name="Woodward J."/>
            <person name="Parkhill J."/>
            <person name="Temple L.M."/>
        </authorList>
    </citation>
    <scope>NUCLEOTIDE SEQUENCE [LARGE SCALE GENOMIC DNA]</scope>
    <source>
        <strain>197N</strain>
    </source>
</reference>
<feature type="chain" id="PRO_0000253646" description="UDP-3-O-acyl-N-acetylglucosamine deacetylase">
    <location>
        <begin position="1"/>
        <end position="307"/>
    </location>
</feature>
<feature type="active site" description="Proton donor" evidence="1">
    <location>
        <position position="268"/>
    </location>
</feature>
<feature type="binding site" evidence="1">
    <location>
        <position position="78"/>
    </location>
    <ligand>
        <name>Zn(2+)</name>
        <dbReference type="ChEBI" id="CHEBI:29105"/>
    </ligand>
</feature>
<feature type="binding site" evidence="1">
    <location>
        <position position="241"/>
    </location>
    <ligand>
        <name>Zn(2+)</name>
        <dbReference type="ChEBI" id="CHEBI:29105"/>
    </ligand>
</feature>
<feature type="binding site" evidence="1">
    <location>
        <position position="245"/>
    </location>
    <ligand>
        <name>Zn(2+)</name>
        <dbReference type="ChEBI" id="CHEBI:29105"/>
    </ligand>
</feature>
<accession>Q2KVH1</accession>
<gene>
    <name evidence="1" type="primary">lpxC</name>
    <name type="ordered locus">BAV2873</name>
</gene>